<keyword id="KW-0479">Metal-binding</keyword>
<keyword id="KW-1185">Reference proteome</keyword>
<keyword id="KW-0862">Zinc</keyword>
<sequence length="70" mass="8021">MTTTVKCPTCQKEVIWNSESKFKPFCSDRCKLIDLGDWASEKHAIPVKSEFDPETLDGLGYDEADFFKDQ</sequence>
<dbReference type="EMBL" id="CP000821">
    <property type="protein sequence ID" value="ABV35033.1"/>
    <property type="molecule type" value="Genomic_DNA"/>
</dbReference>
<dbReference type="RefSeq" id="WP_012140770.1">
    <property type="nucleotide sequence ID" value="NC_009831.1"/>
</dbReference>
<dbReference type="SMR" id="A8FQB0"/>
<dbReference type="STRING" id="425104.Ssed_0420"/>
<dbReference type="KEGG" id="sse:Ssed_0420"/>
<dbReference type="eggNOG" id="COG3024">
    <property type="taxonomic scope" value="Bacteria"/>
</dbReference>
<dbReference type="HOGENOM" id="CLU_178280_1_0_6"/>
<dbReference type="OrthoDB" id="9809663at2"/>
<dbReference type="Proteomes" id="UP000002015">
    <property type="component" value="Chromosome"/>
</dbReference>
<dbReference type="GO" id="GO:0008657">
    <property type="term" value="F:DNA topoisomerase type II (double strand cut, ATP-hydrolyzing) inhibitor activity"/>
    <property type="evidence" value="ECO:0007669"/>
    <property type="project" value="UniProtKB-UniRule"/>
</dbReference>
<dbReference type="GO" id="GO:0008270">
    <property type="term" value="F:zinc ion binding"/>
    <property type="evidence" value="ECO:0007669"/>
    <property type="project" value="UniProtKB-UniRule"/>
</dbReference>
<dbReference type="GO" id="GO:0006355">
    <property type="term" value="P:regulation of DNA-templated transcription"/>
    <property type="evidence" value="ECO:0007669"/>
    <property type="project" value="InterPro"/>
</dbReference>
<dbReference type="Gene3D" id="3.30.50.10">
    <property type="entry name" value="Erythroid Transcription Factor GATA-1, subunit A"/>
    <property type="match status" value="1"/>
</dbReference>
<dbReference type="HAMAP" id="MF_00649">
    <property type="entry name" value="DNA_gyrase_inhibitor_YacG"/>
    <property type="match status" value="1"/>
</dbReference>
<dbReference type="InterPro" id="IPR005584">
    <property type="entry name" value="DNA_gyrase_inhibitor_YacG"/>
</dbReference>
<dbReference type="InterPro" id="IPR013088">
    <property type="entry name" value="Znf_NHR/GATA"/>
</dbReference>
<dbReference type="NCBIfam" id="NF001638">
    <property type="entry name" value="PRK00418.1"/>
    <property type="match status" value="1"/>
</dbReference>
<dbReference type="PANTHER" id="PTHR36150">
    <property type="entry name" value="DNA GYRASE INHIBITOR YACG"/>
    <property type="match status" value="1"/>
</dbReference>
<dbReference type="PANTHER" id="PTHR36150:SF1">
    <property type="entry name" value="DNA GYRASE INHIBITOR YACG"/>
    <property type="match status" value="1"/>
</dbReference>
<dbReference type="Pfam" id="PF03884">
    <property type="entry name" value="YacG"/>
    <property type="match status" value="1"/>
</dbReference>
<dbReference type="SUPFAM" id="SSF57716">
    <property type="entry name" value="Glucocorticoid receptor-like (DNA-binding domain)"/>
    <property type="match status" value="1"/>
</dbReference>
<name>YACG_SHESH</name>
<feature type="chain" id="PRO_1000082730" description="DNA gyrase inhibitor YacG">
    <location>
        <begin position="1"/>
        <end position="70"/>
    </location>
</feature>
<feature type="binding site" evidence="1">
    <location>
        <position position="7"/>
    </location>
    <ligand>
        <name>Zn(2+)</name>
        <dbReference type="ChEBI" id="CHEBI:29105"/>
    </ligand>
</feature>
<feature type="binding site" evidence="1">
    <location>
        <position position="10"/>
    </location>
    <ligand>
        <name>Zn(2+)</name>
        <dbReference type="ChEBI" id="CHEBI:29105"/>
    </ligand>
</feature>
<feature type="binding site" evidence="1">
    <location>
        <position position="26"/>
    </location>
    <ligand>
        <name>Zn(2+)</name>
        <dbReference type="ChEBI" id="CHEBI:29105"/>
    </ligand>
</feature>
<feature type="binding site" evidence="1">
    <location>
        <position position="30"/>
    </location>
    <ligand>
        <name>Zn(2+)</name>
        <dbReference type="ChEBI" id="CHEBI:29105"/>
    </ligand>
</feature>
<comment type="function">
    <text evidence="1">Inhibits all the catalytic activities of DNA gyrase by preventing its interaction with DNA. Acts by binding directly to the C-terminal domain of GyrB, which probably disrupts DNA binding by the gyrase.</text>
</comment>
<comment type="cofactor">
    <cofactor evidence="1">
        <name>Zn(2+)</name>
        <dbReference type="ChEBI" id="CHEBI:29105"/>
    </cofactor>
    <text evidence="1">Binds 1 zinc ion.</text>
</comment>
<comment type="subunit">
    <text evidence="1">Interacts with GyrB.</text>
</comment>
<comment type="similarity">
    <text evidence="1">Belongs to the DNA gyrase inhibitor YacG family.</text>
</comment>
<accession>A8FQB0</accession>
<reference key="1">
    <citation type="submission" date="2007-08" db="EMBL/GenBank/DDBJ databases">
        <title>Complete sequence of Shewanella sediminis HAW-EB3.</title>
        <authorList>
            <consortium name="US DOE Joint Genome Institute"/>
            <person name="Copeland A."/>
            <person name="Lucas S."/>
            <person name="Lapidus A."/>
            <person name="Barry K."/>
            <person name="Glavina del Rio T."/>
            <person name="Dalin E."/>
            <person name="Tice H."/>
            <person name="Pitluck S."/>
            <person name="Chertkov O."/>
            <person name="Brettin T."/>
            <person name="Bruce D."/>
            <person name="Detter J.C."/>
            <person name="Han C."/>
            <person name="Schmutz J."/>
            <person name="Larimer F."/>
            <person name="Land M."/>
            <person name="Hauser L."/>
            <person name="Kyrpides N."/>
            <person name="Kim E."/>
            <person name="Zhao J.-S."/>
            <person name="Richardson P."/>
        </authorList>
    </citation>
    <scope>NUCLEOTIDE SEQUENCE [LARGE SCALE GENOMIC DNA]</scope>
    <source>
        <strain>HAW-EB3</strain>
    </source>
</reference>
<gene>
    <name evidence="1" type="primary">yacG</name>
    <name type="ordered locus">Ssed_0420</name>
</gene>
<protein>
    <recommendedName>
        <fullName evidence="1">DNA gyrase inhibitor YacG</fullName>
    </recommendedName>
</protein>
<proteinExistence type="inferred from homology"/>
<evidence type="ECO:0000255" key="1">
    <source>
        <dbReference type="HAMAP-Rule" id="MF_00649"/>
    </source>
</evidence>
<organism>
    <name type="scientific">Shewanella sediminis (strain HAW-EB3)</name>
    <dbReference type="NCBI Taxonomy" id="425104"/>
    <lineage>
        <taxon>Bacteria</taxon>
        <taxon>Pseudomonadati</taxon>
        <taxon>Pseudomonadota</taxon>
        <taxon>Gammaproteobacteria</taxon>
        <taxon>Alteromonadales</taxon>
        <taxon>Shewanellaceae</taxon>
        <taxon>Shewanella</taxon>
    </lineage>
</organism>